<feature type="chain" id="PRO_0000181766" description="tRNA(Ile)-lysidine synthase">
    <location>
        <begin position="1"/>
        <end position="431"/>
    </location>
</feature>
<feature type="binding site" evidence="1">
    <location>
        <begin position="19"/>
        <end position="24"/>
    </location>
    <ligand>
        <name>ATP</name>
        <dbReference type="ChEBI" id="CHEBI:30616"/>
    </ligand>
</feature>
<protein>
    <recommendedName>
        <fullName evidence="1">tRNA(Ile)-lysidine synthase</fullName>
        <ecNumber evidence="1">6.3.4.19</ecNumber>
    </recommendedName>
    <alternativeName>
        <fullName evidence="1">tRNA(Ile)-2-lysyl-cytidine synthase</fullName>
    </alternativeName>
    <alternativeName>
        <fullName evidence="1">tRNA(Ile)-lysidine synthetase</fullName>
    </alternativeName>
</protein>
<name>TILS_STAAM</name>
<dbReference type="EC" id="6.3.4.19" evidence="1"/>
<dbReference type="EMBL" id="BA000017">
    <property type="protein sequence ID" value="BAB56671.1"/>
    <property type="molecule type" value="Genomic_DNA"/>
</dbReference>
<dbReference type="RefSeq" id="WP_001176709.1">
    <property type="nucleotide sequence ID" value="NC_002758.2"/>
</dbReference>
<dbReference type="SMR" id="Q99W94"/>
<dbReference type="KEGG" id="sav:SAV0509"/>
<dbReference type="HOGENOM" id="CLU_018869_0_2_9"/>
<dbReference type="PhylomeDB" id="Q99W94"/>
<dbReference type="Proteomes" id="UP000002481">
    <property type="component" value="Chromosome"/>
</dbReference>
<dbReference type="GO" id="GO:0005737">
    <property type="term" value="C:cytoplasm"/>
    <property type="evidence" value="ECO:0007669"/>
    <property type="project" value="UniProtKB-SubCell"/>
</dbReference>
<dbReference type="GO" id="GO:0005524">
    <property type="term" value="F:ATP binding"/>
    <property type="evidence" value="ECO:0007669"/>
    <property type="project" value="UniProtKB-KW"/>
</dbReference>
<dbReference type="GO" id="GO:0032267">
    <property type="term" value="F:tRNA(Ile)-lysidine synthase activity"/>
    <property type="evidence" value="ECO:0007669"/>
    <property type="project" value="UniProtKB-EC"/>
</dbReference>
<dbReference type="GO" id="GO:0006400">
    <property type="term" value="P:tRNA modification"/>
    <property type="evidence" value="ECO:0007669"/>
    <property type="project" value="UniProtKB-UniRule"/>
</dbReference>
<dbReference type="CDD" id="cd01992">
    <property type="entry name" value="TilS_N"/>
    <property type="match status" value="1"/>
</dbReference>
<dbReference type="Gene3D" id="3.40.50.620">
    <property type="entry name" value="HUPs"/>
    <property type="match status" value="1"/>
</dbReference>
<dbReference type="HAMAP" id="MF_01161">
    <property type="entry name" value="tRNA_Ile_lys_synt"/>
    <property type="match status" value="1"/>
</dbReference>
<dbReference type="InterPro" id="IPR012796">
    <property type="entry name" value="Lysidine-tRNA-synth_C"/>
</dbReference>
<dbReference type="InterPro" id="IPR014729">
    <property type="entry name" value="Rossmann-like_a/b/a_fold"/>
</dbReference>
<dbReference type="InterPro" id="IPR011063">
    <property type="entry name" value="TilS/TtcA_N"/>
</dbReference>
<dbReference type="InterPro" id="IPR012094">
    <property type="entry name" value="tRNA_Ile_lys_synt"/>
</dbReference>
<dbReference type="InterPro" id="IPR012795">
    <property type="entry name" value="tRNA_Ile_lys_synt_N"/>
</dbReference>
<dbReference type="NCBIfam" id="TIGR02433">
    <property type="entry name" value="lysidine_TilS_C"/>
    <property type="match status" value="1"/>
</dbReference>
<dbReference type="NCBIfam" id="TIGR02432">
    <property type="entry name" value="lysidine_TilS_N"/>
    <property type="match status" value="1"/>
</dbReference>
<dbReference type="PANTHER" id="PTHR43033">
    <property type="entry name" value="TRNA(ILE)-LYSIDINE SYNTHASE-RELATED"/>
    <property type="match status" value="1"/>
</dbReference>
<dbReference type="PANTHER" id="PTHR43033:SF1">
    <property type="entry name" value="TRNA(ILE)-LYSIDINE SYNTHASE-RELATED"/>
    <property type="match status" value="1"/>
</dbReference>
<dbReference type="Pfam" id="PF01171">
    <property type="entry name" value="ATP_bind_3"/>
    <property type="match status" value="1"/>
</dbReference>
<dbReference type="Pfam" id="PF11734">
    <property type="entry name" value="TilS_C"/>
    <property type="match status" value="1"/>
</dbReference>
<dbReference type="SMART" id="SM00977">
    <property type="entry name" value="TilS_C"/>
    <property type="match status" value="1"/>
</dbReference>
<dbReference type="SUPFAM" id="SSF52402">
    <property type="entry name" value="Adenine nucleotide alpha hydrolases-like"/>
    <property type="match status" value="1"/>
</dbReference>
<dbReference type="SUPFAM" id="SSF56037">
    <property type="entry name" value="PheT/TilS domain"/>
    <property type="match status" value="1"/>
</dbReference>
<organism>
    <name type="scientific">Staphylococcus aureus (strain Mu50 / ATCC 700699)</name>
    <dbReference type="NCBI Taxonomy" id="158878"/>
    <lineage>
        <taxon>Bacteria</taxon>
        <taxon>Bacillati</taxon>
        <taxon>Bacillota</taxon>
        <taxon>Bacilli</taxon>
        <taxon>Bacillales</taxon>
        <taxon>Staphylococcaceae</taxon>
        <taxon>Staphylococcus</taxon>
    </lineage>
</organism>
<keyword id="KW-0067">ATP-binding</keyword>
<keyword id="KW-0963">Cytoplasm</keyword>
<keyword id="KW-0436">Ligase</keyword>
<keyword id="KW-0547">Nucleotide-binding</keyword>
<keyword id="KW-0819">tRNA processing</keyword>
<evidence type="ECO:0000255" key="1">
    <source>
        <dbReference type="HAMAP-Rule" id="MF_01161"/>
    </source>
</evidence>
<comment type="function">
    <text evidence="1">Ligates lysine onto the cytidine present at position 34 of the AUA codon-specific tRNA(Ile) that contains the anticodon CAU, in an ATP-dependent manner. Cytidine is converted to lysidine, thus changing the amino acid specificity of the tRNA from methionine to isoleucine.</text>
</comment>
<comment type="catalytic activity">
    <reaction evidence="1">
        <text>cytidine(34) in tRNA(Ile2) + L-lysine + ATP = lysidine(34) in tRNA(Ile2) + AMP + diphosphate + H(+)</text>
        <dbReference type="Rhea" id="RHEA:43744"/>
        <dbReference type="Rhea" id="RHEA-COMP:10625"/>
        <dbReference type="Rhea" id="RHEA-COMP:10670"/>
        <dbReference type="ChEBI" id="CHEBI:15378"/>
        <dbReference type="ChEBI" id="CHEBI:30616"/>
        <dbReference type="ChEBI" id="CHEBI:32551"/>
        <dbReference type="ChEBI" id="CHEBI:33019"/>
        <dbReference type="ChEBI" id="CHEBI:82748"/>
        <dbReference type="ChEBI" id="CHEBI:83665"/>
        <dbReference type="ChEBI" id="CHEBI:456215"/>
        <dbReference type="EC" id="6.3.4.19"/>
    </reaction>
</comment>
<comment type="subcellular location">
    <subcellularLocation>
        <location evidence="1">Cytoplasm</location>
    </subcellularLocation>
</comment>
<comment type="domain">
    <text>The N-terminal region contains the highly conserved SGGXDS motif, predicted to be a P-loop motif involved in ATP binding.</text>
</comment>
<comment type="similarity">
    <text evidence="1">Belongs to the tRNA(Ile)-lysidine synthase family.</text>
</comment>
<proteinExistence type="inferred from homology"/>
<sequence>MQLNSNGWHVDDHIVVAVSTGIDSMCLLYQLLNDYKDSYRKLTCLHVNHGVRSASIEEARFLEAYCERHHIDLHIKKLDLSHSLDRNNSIQNEARIKRYEWFDEMMNVLEADVLLTAHHLDDQLETIMYRIFNGKSTRNKLGFDELSKRKGYQIYRPLLAVSKKEIKQFQERYHIPYFEDESNKDNKYIRNDIRNRIIPAIDENNQLKVSHLLKLKQWHDEQYDILQYSAKQFIQEFVKFDEQSKYLEVSRQAFNNLPNSLKMVVLDCLLSKYYELFNISAKTYEEWFKQFSSKKAQFSINLTDKWIIQIAYGKLIIMAKNNGDTYFRVQTIKKPGNYFFNKYRLEIHSNLPKCLFPLTVRTRQSGDTFKLNGRDGYKKVNRLFIDCKVPQWVRDQMPIVLDKQQRIIAVGDLYQQQTIKKWIIISKNGDE</sequence>
<accession>Q99W94</accession>
<gene>
    <name evidence="1" type="primary">tilS</name>
    <name type="ordered locus">SAV0509</name>
</gene>
<reference key="1">
    <citation type="journal article" date="2001" name="Lancet">
        <title>Whole genome sequencing of meticillin-resistant Staphylococcus aureus.</title>
        <authorList>
            <person name="Kuroda M."/>
            <person name="Ohta T."/>
            <person name="Uchiyama I."/>
            <person name="Baba T."/>
            <person name="Yuzawa H."/>
            <person name="Kobayashi I."/>
            <person name="Cui L."/>
            <person name="Oguchi A."/>
            <person name="Aoki K."/>
            <person name="Nagai Y."/>
            <person name="Lian J.-Q."/>
            <person name="Ito T."/>
            <person name="Kanamori M."/>
            <person name="Matsumaru H."/>
            <person name="Maruyama A."/>
            <person name="Murakami H."/>
            <person name="Hosoyama A."/>
            <person name="Mizutani-Ui Y."/>
            <person name="Takahashi N.K."/>
            <person name="Sawano T."/>
            <person name="Inoue R."/>
            <person name="Kaito C."/>
            <person name="Sekimizu K."/>
            <person name="Hirakawa H."/>
            <person name="Kuhara S."/>
            <person name="Goto S."/>
            <person name="Yabuzaki J."/>
            <person name="Kanehisa M."/>
            <person name="Yamashita A."/>
            <person name="Oshima K."/>
            <person name="Furuya K."/>
            <person name="Yoshino C."/>
            <person name="Shiba T."/>
            <person name="Hattori M."/>
            <person name="Ogasawara N."/>
            <person name="Hayashi H."/>
            <person name="Hiramatsu K."/>
        </authorList>
    </citation>
    <scope>NUCLEOTIDE SEQUENCE [LARGE SCALE GENOMIC DNA]</scope>
    <source>
        <strain>Mu50 / ATCC 700699</strain>
    </source>
</reference>